<organism>
    <name type="scientific">Yersinia pseudotuberculosis serotype I (strain IP32953)</name>
    <dbReference type="NCBI Taxonomy" id="273123"/>
    <lineage>
        <taxon>Bacteria</taxon>
        <taxon>Pseudomonadati</taxon>
        <taxon>Pseudomonadota</taxon>
        <taxon>Gammaproteobacteria</taxon>
        <taxon>Enterobacterales</taxon>
        <taxon>Yersiniaceae</taxon>
        <taxon>Yersinia</taxon>
    </lineage>
</organism>
<accession>Q66E67</accession>
<proteinExistence type="inferred from homology"/>
<gene>
    <name evidence="1" type="primary">csrA</name>
    <name type="ordered locus">YPTB0826</name>
</gene>
<comment type="function">
    <text evidence="1">A key translational regulator that binds mRNA to regulate translation initiation and/or mRNA stability. Mediates global changes in gene expression, shifting from rapid growth to stress survival by linking envelope stress, the stringent response and the catabolite repression systems. Usually binds in the 5'-UTR; binding at or near the Shine-Dalgarno sequence prevents ribosome-binding, repressing translation, binding elsewhere in the 5'-UTR can activate translation and/or stabilize the mRNA. Its function is antagonized by small RNA(s).</text>
</comment>
<comment type="subunit">
    <text evidence="1">Homodimer; the beta-strands of each monomer intercalate to form a hydrophobic core, while the alpha-helices form wings that extend away from the core.</text>
</comment>
<comment type="subcellular location">
    <subcellularLocation>
        <location evidence="1">Cytoplasm</location>
    </subcellularLocation>
</comment>
<comment type="similarity">
    <text evidence="1">Belongs to the CsrA/RsmA family.</text>
</comment>
<protein>
    <recommendedName>
        <fullName evidence="1">Translational regulator CsrA</fullName>
    </recommendedName>
    <alternativeName>
        <fullName evidence="1">Carbon storage regulator</fullName>
    </alternativeName>
</protein>
<evidence type="ECO:0000255" key="1">
    <source>
        <dbReference type="HAMAP-Rule" id="MF_00167"/>
    </source>
</evidence>
<dbReference type="EMBL" id="BX936398">
    <property type="protein sequence ID" value="CAH20066.1"/>
    <property type="molecule type" value="Genomic_DNA"/>
</dbReference>
<dbReference type="RefSeq" id="WP_002209449.1">
    <property type="nucleotide sequence ID" value="NZ_CP009712.1"/>
</dbReference>
<dbReference type="SMR" id="Q66E67"/>
<dbReference type="GeneID" id="97457422"/>
<dbReference type="KEGG" id="ypo:BZ17_1730"/>
<dbReference type="KEGG" id="yps:YPTB0826"/>
<dbReference type="PATRIC" id="fig|273123.14.peg.1831"/>
<dbReference type="Proteomes" id="UP000001011">
    <property type="component" value="Chromosome"/>
</dbReference>
<dbReference type="GO" id="GO:0005829">
    <property type="term" value="C:cytosol"/>
    <property type="evidence" value="ECO:0007669"/>
    <property type="project" value="TreeGrafter"/>
</dbReference>
<dbReference type="GO" id="GO:0048027">
    <property type="term" value="F:mRNA 5'-UTR binding"/>
    <property type="evidence" value="ECO:0007669"/>
    <property type="project" value="UniProtKB-UniRule"/>
</dbReference>
<dbReference type="GO" id="GO:0006402">
    <property type="term" value="P:mRNA catabolic process"/>
    <property type="evidence" value="ECO:0007669"/>
    <property type="project" value="InterPro"/>
</dbReference>
<dbReference type="GO" id="GO:0045947">
    <property type="term" value="P:negative regulation of translational initiation"/>
    <property type="evidence" value="ECO:0007669"/>
    <property type="project" value="UniProtKB-UniRule"/>
</dbReference>
<dbReference type="GO" id="GO:0045948">
    <property type="term" value="P:positive regulation of translational initiation"/>
    <property type="evidence" value="ECO:0007669"/>
    <property type="project" value="UniProtKB-UniRule"/>
</dbReference>
<dbReference type="GO" id="GO:0006109">
    <property type="term" value="P:regulation of carbohydrate metabolic process"/>
    <property type="evidence" value="ECO:0007669"/>
    <property type="project" value="UniProtKB-UniRule"/>
</dbReference>
<dbReference type="FunFam" id="2.60.40.4380:FF:000001">
    <property type="entry name" value="Translational regulator CsrA"/>
    <property type="match status" value="1"/>
</dbReference>
<dbReference type="Gene3D" id="2.60.40.4380">
    <property type="entry name" value="Translational regulator CsrA"/>
    <property type="match status" value="1"/>
</dbReference>
<dbReference type="HAMAP" id="MF_00167">
    <property type="entry name" value="CsrA"/>
    <property type="match status" value="1"/>
</dbReference>
<dbReference type="InterPro" id="IPR003751">
    <property type="entry name" value="CsrA"/>
</dbReference>
<dbReference type="InterPro" id="IPR036107">
    <property type="entry name" value="CsrA_sf"/>
</dbReference>
<dbReference type="NCBIfam" id="TIGR00202">
    <property type="entry name" value="csrA"/>
    <property type="match status" value="1"/>
</dbReference>
<dbReference type="NCBIfam" id="NF002469">
    <property type="entry name" value="PRK01712.1"/>
    <property type="match status" value="1"/>
</dbReference>
<dbReference type="PANTHER" id="PTHR34984">
    <property type="entry name" value="CARBON STORAGE REGULATOR"/>
    <property type="match status" value="1"/>
</dbReference>
<dbReference type="PANTHER" id="PTHR34984:SF1">
    <property type="entry name" value="CARBON STORAGE REGULATOR"/>
    <property type="match status" value="1"/>
</dbReference>
<dbReference type="Pfam" id="PF02599">
    <property type="entry name" value="CsrA"/>
    <property type="match status" value="1"/>
</dbReference>
<dbReference type="SUPFAM" id="SSF117130">
    <property type="entry name" value="CsrA-like"/>
    <property type="match status" value="1"/>
</dbReference>
<name>CSRA_YERPS</name>
<feature type="chain" id="PRO_0000177105" description="Translational regulator CsrA">
    <location>
        <begin position="1"/>
        <end position="61"/>
    </location>
</feature>
<sequence length="61" mass="6853">MLILTRRVGETLMIGDEVTVTVLGVKGNQVRIGVNAPKEVSVHREEIYQRIQAEKSQPTTY</sequence>
<reference key="1">
    <citation type="journal article" date="2004" name="Proc. Natl. Acad. Sci. U.S.A.">
        <title>Insights into the evolution of Yersinia pestis through whole-genome comparison with Yersinia pseudotuberculosis.</title>
        <authorList>
            <person name="Chain P.S.G."/>
            <person name="Carniel E."/>
            <person name="Larimer F.W."/>
            <person name="Lamerdin J."/>
            <person name="Stoutland P.O."/>
            <person name="Regala W.M."/>
            <person name="Georgescu A.M."/>
            <person name="Vergez L.M."/>
            <person name="Land M.L."/>
            <person name="Motin V.L."/>
            <person name="Brubaker R.R."/>
            <person name="Fowler J."/>
            <person name="Hinnebusch J."/>
            <person name="Marceau M."/>
            <person name="Medigue C."/>
            <person name="Simonet M."/>
            <person name="Chenal-Francisque V."/>
            <person name="Souza B."/>
            <person name="Dacheux D."/>
            <person name="Elliott J.M."/>
            <person name="Derbise A."/>
            <person name="Hauser L.J."/>
            <person name="Garcia E."/>
        </authorList>
    </citation>
    <scope>NUCLEOTIDE SEQUENCE [LARGE SCALE GENOMIC DNA]</scope>
    <source>
        <strain>IP32953</strain>
    </source>
</reference>
<keyword id="KW-0010">Activator</keyword>
<keyword id="KW-0963">Cytoplasm</keyword>
<keyword id="KW-0678">Repressor</keyword>
<keyword id="KW-0694">RNA-binding</keyword>
<keyword id="KW-0810">Translation regulation</keyword>